<gene>
    <name evidence="1" type="primary">murC</name>
    <name type="ordered locus">Dalk_3130</name>
</gene>
<protein>
    <recommendedName>
        <fullName evidence="1">UDP-N-acetylmuramate--L-alanine ligase</fullName>
        <ecNumber evidence="1">6.3.2.8</ecNumber>
    </recommendedName>
    <alternativeName>
        <fullName evidence="1">UDP-N-acetylmuramoyl-L-alanine synthetase</fullName>
    </alternativeName>
</protein>
<organism>
    <name type="scientific">Desulfatibacillum aliphaticivorans</name>
    <dbReference type="NCBI Taxonomy" id="218208"/>
    <lineage>
        <taxon>Bacteria</taxon>
        <taxon>Pseudomonadati</taxon>
        <taxon>Thermodesulfobacteriota</taxon>
        <taxon>Desulfobacteria</taxon>
        <taxon>Desulfobacterales</taxon>
        <taxon>Desulfatibacillaceae</taxon>
        <taxon>Desulfatibacillum</taxon>
    </lineage>
</organism>
<accession>B8FBR7</accession>
<feature type="chain" id="PRO_1000116620" description="UDP-N-acetylmuramate--L-alanine ligase">
    <location>
        <begin position="1"/>
        <end position="456"/>
    </location>
</feature>
<feature type="binding site" evidence="1">
    <location>
        <begin position="112"/>
        <end position="118"/>
    </location>
    <ligand>
        <name>ATP</name>
        <dbReference type="ChEBI" id="CHEBI:30616"/>
    </ligand>
</feature>
<keyword id="KW-0067">ATP-binding</keyword>
<keyword id="KW-0131">Cell cycle</keyword>
<keyword id="KW-0132">Cell division</keyword>
<keyword id="KW-0133">Cell shape</keyword>
<keyword id="KW-0961">Cell wall biogenesis/degradation</keyword>
<keyword id="KW-0963">Cytoplasm</keyword>
<keyword id="KW-0436">Ligase</keyword>
<keyword id="KW-0547">Nucleotide-binding</keyword>
<keyword id="KW-0573">Peptidoglycan synthesis</keyword>
<keyword id="KW-1185">Reference proteome</keyword>
<evidence type="ECO:0000255" key="1">
    <source>
        <dbReference type="HAMAP-Rule" id="MF_00046"/>
    </source>
</evidence>
<dbReference type="EC" id="6.3.2.8" evidence="1"/>
<dbReference type="EMBL" id="CP001322">
    <property type="protein sequence ID" value="ACL04820.1"/>
    <property type="molecule type" value="Genomic_DNA"/>
</dbReference>
<dbReference type="RefSeq" id="WP_015947880.1">
    <property type="nucleotide sequence ID" value="NC_011768.1"/>
</dbReference>
<dbReference type="SMR" id="B8FBR7"/>
<dbReference type="KEGG" id="dal:Dalk_3130"/>
<dbReference type="eggNOG" id="COG0773">
    <property type="taxonomic scope" value="Bacteria"/>
</dbReference>
<dbReference type="HOGENOM" id="CLU_028104_2_2_7"/>
<dbReference type="UniPathway" id="UPA00219"/>
<dbReference type="Proteomes" id="UP000000739">
    <property type="component" value="Chromosome"/>
</dbReference>
<dbReference type="GO" id="GO:0005737">
    <property type="term" value="C:cytoplasm"/>
    <property type="evidence" value="ECO:0007669"/>
    <property type="project" value="UniProtKB-SubCell"/>
</dbReference>
<dbReference type="GO" id="GO:0005524">
    <property type="term" value="F:ATP binding"/>
    <property type="evidence" value="ECO:0007669"/>
    <property type="project" value="UniProtKB-UniRule"/>
</dbReference>
<dbReference type="GO" id="GO:0008763">
    <property type="term" value="F:UDP-N-acetylmuramate-L-alanine ligase activity"/>
    <property type="evidence" value="ECO:0007669"/>
    <property type="project" value="UniProtKB-UniRule"/>
</dbReference>
<dbReference type="GO" id="GO:0051301">
    <property type="term" value="P:cell division"/>
    <property type="evidence" value="ECO:0007669"/>
    <property type="project" value="UniProtKB-KW"/>
</dbReference>
<dbReference type="GO" id="GO:0071555">
    <property type="term" value="P:cell wall organization"/>
    <property type="evidence" value="ECO:0007669"/>
    <property type="project" value="UniProtKB-KW"/>
</dbReference>
<dbReference type="GO" id="GO:0009252">
    <property type="term" value="P:peptidoglycan biosynthetic process"/>
    <property type="evidence" value="ECO:0007669"/>
    <property type="project" value="UniProtKB-UniRule"/>
</dbReference>
<dbReference type="GO" id="GO:0008360">
    <property type="term" value="P:regulation of cell shape"/>
    <property type="evidence" value="ECO:0007669"/>
    <property type="project" value="UniProtKB-KW"/>
</dbReference>
<dbReference type="Gene3D" id="3.90.190.20">
    <property type="entry name" value="Mur ligase, C-terminal domain"/>
    <property type="match status" value="1"/>
</dbReference>
<dbReference type="Gene3D" id="3.40.1190.10">
    <property type="entry name" value="Mur-like, catalytic domain"/>
    <property type="match status" value="1"/>
</dbReference>
<dbReference type="Gene3D" id="3.40.50.720">
    <property type="entry name" value="NAD(P)-binding Rossmann-like Domain"/>
    <property type="match status" value="1"/>
</dbReference>
<dbReference type="HAMAP" id="MF_00046">
    <property type="entry name" value="MurC"/>
    <property type="match status" value="1"/>
</dbReference>
<dbReference type="InterPro" id="IPR036565">
    <property type="entry name" value="Mur-like_cat_sf"/>
</dbReference>
<dbReference type="InterPro" id="IPR004101">
    <property type="entry name" value="Mur_ligase_C"/>
</dbReference>
<dbReference type="InterPro" id="IPR036615">
    <property type="entry name" value="Mur_ligase_C_dom_sf"/>
</dbReference>
<dbReference type="InterPro" id="IPR013221">
    <property type="entry name" value="Mur_ligase_cen"/>
</dbReference>
<dbReference type="InterPro" id="IPR000713">
    <property type="entry name" value="Mur_ligase_N"/>
</dbReference>
<dbReference type="InterPro" id="IPR050061">
    <property type="entry name" value="MurCDEF_pg_biosynth"/>
</dbReference>
<dbReference type="InterPro" id="IPR005758">
    <property type="entry name" value="UDP-N-AcMur_Ala_ligase_MurC"/>
</dbReference>
<dbReference type="NCBIfam" id="TIGR01082">
    <property type="entry name" value="murC"/>
    <property type="match status" value="1"/>
</dbReference>
<dbReference type="PANTHER" id="PTHR43445:SF3">
    <property type="entry name" value="UDP-N-ACETYLMURAMATE--L-ALANINE LIGASE"/>
    <property type="match status" value="1"/>
</dbReference>
<dbReference type="PANTHER" id="PTHR43445">
    <property type="entry name" value="UDP-N-ACETYLMURAMATE--L-ALANINE LIGASE-RELATED"/>
    <property type="match status" value="1"/>
</dbReference>
<dbReference type="Pfam" id="PF01225">
    <property type="entry name" value="Mur_ligase"/>
    <property type="match status" value="1"/>
</dbReference>
<dbReference type="Pfam" id="PF02875">
    <property type="entry name" value="Mur_ligase_C"/>
    <property type="match status" value="1"/>
</dbReference>
<dbReference type="Pfam" id="PF08245">
    <property type="entry name" value="Mur_ligase_M"/>
    <property type="match status" value="1"/>
</dbReference>
<dbReference type="SUPFAM" id="SSF51984">
    <property type="entry name" value="MurCD N-terminal domain"/>
    <property type="match status" value="1"/>
</dbReference>
<dbReference type="SUPFAM" id="SSF53623">
    <property type="entry name" value="MurD-like peptide ligases, catalytic domain"/>
    <property type="match status" value="1"/>
</dbReference>
<dbReference type="SUPFAM" id="SSF53244">
    <property type="entry name" value="MurD-like peptide ligases, peptide-binding domain"/>
    <property type="match status" value="1"/>
</dbReference>
<proteinExistence type="inferred from homology"/>
<sequence>MYRKKYSIHFVGIGGIGMSGIAELLLNLGYQVSGSDIKESDITQRLAKLGGTIYRGHRAENVKGCDVVVVSSAIRQENPETASAREQGIPVIPRAEMLAELMRLKYSVAIAGAHGKTTTTSIVADVLAAGGLDPTVVIGGKLLSIGSNAKLGHGEFIVAEADESDGSFLKMSPSIAVVTNIDREHMDHYKDMDEIKDAFAQFVDKIPFYGLSVLCLDSEPVQDLIPFINKRYVTYGLTTQADLQAGDVTTEGLTSRFTVRHNKKRLGRITLNLPGLHNVYNSLASIAVGLELNVPFENIKAALESLSGVHRRLETKGKVGGIVVMDDYGHHPTEIRTTLQAVNDSYPERRVGVIFQPHRYSRTQSLFEDFARSFYQADYLVVLPIYPAGEKPIPGVDSVSLCKALKAYGHKHVIHAPSKESALQELDKTVREGDVLITLGAGDVYRVGESFLASRS</sequence>
<reference key="1">
    <citation type="journal article" date="2012" name="Environ. Microbiol.">
        <title>The genome sequence of Desulfatibacillum alkenivorans AK-01: a blueprint for anaerobic alkane oxidation.</title>
        <authorList>
            <person name="Callaghan A.V."/>
            <person name="Morris B.E."/>
            <person name="Pereira I.A."/>
            <person name="McInerney M.J."/>
            <person name="Austin R.N."/>
            <person name="Groves J.T."/>
            <person name="Kukor J.J."/>
            <person name="Suflita J.M."/>
            <person name="Young L.Y."/>
            <person name="Zylstra G.J."/>
            <person name="Wawrik B."/>
        </authorList>
    </citation>
    <scope>NUCLEOTIDE SEQUENCE [LARGE SCALE GENOMIC DNA]</scope>
    <source>
        <strain>AK-01</strain>
    </source>
</reference>
<name>MURC_DESAL</name>
<comment type="function">
    <text evidence="1">Cell wall formation.</text>
</comment>
<comment type="catalytic activity">
    <reaction evidence="1">
        <text>UDP-N-acetyl-alpha-D-muramate + L-alanine + ATP = UDP-N-acetyl-alpha-D-muramoyl-L-alanine + ADP + phosphate + H(+)</text>
        <dbReference type="Rhea" id="RHEA:23372"/>
        <dbReference type="ChEBI" id="CHEBI:15378"/>
        <dbReference type="ChEBI" id="CHEBI:30616"/>
        <dbReference type="ChEBI" id="CHEBI:43474"/>
        <dbReference type="ChEBI" id="CHEBI:57972"/>
        <dbReference type="ChEBI" id="CHEBI:70757"/>
        <dbReference type="ChEBI" id="CHEBI:83898"/>
        <dbReference type="ChEBI" id="CHEBI:456216"/>
        <dbReference type="EC" id="6.3.2.8"/>
    </reaction>
</comment>
<comment type="pathway">
    <text evidence="1">Cell wall biogenesis; peptidoglycan biosynthesis.</text>
</comment>
<comment type="subcellular location">
    <subcellularLocation>
        <location evidence="1">Cytoplasm</location>
    </subcellularLocation>
</comment>
<comment type="similarity">
    <text evidence="1">Belongs to the MurCDEF family.</text>
</comment>